<accession>B3PK56</accession>
<organism>
    <name type="scientific">Cellvibrio japonicus (strain Ueda107)</name>
    <name type="common">Pseudomonas fluorescens subsp. cellulosa</name>
    <dbReference type="NCBI Taxonomy" id="498211"/>
    <lineage>
        <taxon>Bacteria</taxon>
        <taxon>Pseudomonadati</taxon>
        <taxon>Pseudomonadota</taxon>
        <taxon>Gammaproteobacteria</taxon>
        <taxon>Cellvibrionales</taxon>
        <taxon>Cellvibrionaceae</taxon>
        <taxon>Cellvibrio</taxon>
    </lineage>
</organism>
<name>RL15_CELJU</name>
<protein>
    <recommendedName>
        <fullName evidence="1">Large ribosomal subunit protein uL15</fullName>
    </recommendedName>
    <alternativeName>
        <fullName evidence="3">50S ribosomal protein L15</fullName>
    </alternativeName>
</protein>
<sequence length="144" mass="14942">MRLNTLSPAPGRIHAKKRVGRGIGSGLGKTAGRGHKGLKSRSGGSVRPGFEGGQMPLQIRLPKYGFTSRISLVTAEIRLSELNAIEGSVVDIETLKQAGLISSVIKRAKIFASGEVKKAVTVKGLAVTKGAKAAIEAAGGKVEE</sequence>
<keyword id="KW-1185">Reference proteome</keyword>
<keyword id="KW-0687">Ribonucleoprotein</keyword>
<keyword id="KW-0689">Ribosomal protein</keyword>
<keyword id="KW-0694">RNA-binding</keyword>
<keyword id="KW-0699">rRNA-binding</keyword>
<gene>
    <name evidence="1" type="primary">rplO</name>
    <name type="ordered locus">CJA_0718</name>
</gene>
<feature type="chain" id="PRO_1000142788" description="Large ribosomal subunit protein uL15">
    <location>
        <begin position="1"/>
        <end position="144"/>
    </location>
</feature>
<feature type="region of interest" description="Disordered" evidence="2">
    <location>
        <begin position="24"/>
        <end position="52"/>
    </location>
</feature>
<dbReference type="EMBL" id="CP000934">
    <property type="protein sequence ID" value="ACE84960.1"/>
    <property type="molecule type" value="Genomic_DNA"/>
</dbReference>
<dbReference type="RefSeq" id="WP_012486381.1">
    <property type="nucleotide sequence ID" value="NC_010995.1"/>
</dbReference>
<dbReference type="SMR" id="B3PK56"/>
<dbReference type="STRING" id="498211.CJA_0718"/>
<dbReference type="KEGG" id="cja:CJA_0718"/>
<dbReference type="eggNOG" id="COG0200">
    <property type="taxonomic scope" value="Bacteria"/>
</dbReference>
<dbReference type="HOGENOM" id="CLU_055188_4_2_6"/>
<dbReference type="OrthoDB" id="9810293at2"/>
<dbReference type="Proteomes" id="UP000001036">
    <property type="component" value="Chromosome"/>
</dbReference>
<dbReference type="GO" id="GO:0022625">
    <property type="term" value="C:cytosolic large ribosomal subunit"/>
    <property type="evidence" value="ECO:0007669"/>
    <property type="project" value="TreeGrafter"/>
</dbReference>
<dbReference type="GO" id="GO:0019843">
    <property type="term" value="F:rRNA binding"/>
    <property type="evidence" value="ECO:0007669"/>
    <property type="project" value="UniProtKB-UniRule"/>
</dbReference>
<dbReference type="GO" id="GO:0003735">
    <property type="term" value="F:structural constituent of ribosome"/>
    <property type="evidence" value="ECO:0007669"/>
    <property type="project" value="InterPro"/>
</dbReference>
<dbReference type="GO" id="GO:0006412">
    <property type="term" value="P:translation"/>
    <property type="evidence" value="ECO:0007669"/>
    <property type="project" value="UniProtKB-UniRule"/>
</dbReference>
<dbReference type="Gene3D" id="3.100.10.10">
    <property type="match status" value="1"/>
</dbReference>
<dbReference type="HAMAP" id="MF_01341">
    <property type="entry name" value="Ribosomal_uL15"/>
    <property type="match status" value="1"/>
</dbReference>
<dbReference type="InterPro" id="IPR030878">
    <property type="entry name" value="Ribosomal_uL15"/>
</dbReference>
<dbReference type="InterPro" id="IPR021131">
    <property type="entry name" value="Ribosomal_uL15/eL18"/>
</dbReference>
<dbReference type="InterPro" id="IPR036227">
    <property type="entry name" value="Ribosomal_uL15/eL18_sf"/>
</dbReference>
<dbReference type="InterPro" id="IPR005749">
    <property type="entry name" value="Ribosomal_uL15_bac-type"/>
</dbReference>
<dbReference type="NCBIfam" id="TIGR01071">
    <property type="entry name" value="rplO_bact"/>
    <property type="match status" value="1"/>
</dbReference>
<dbReference type="PANTHER" id="PTHR12934">
    <property type="entry name" value="50S RIBOSOMAL PROTEIN L15"/>
    <property type="match status" value="1"/>
</dbReference>
<dbReference type="PANTHER" id="PTHR12934:SF11">
    <property type="entry name" value="LARGE RIBOSOMAL SUBUNIT PROTEIN UL15M"/>
    <property type="match status" value="1"/>
</dbReference>
<dbReference type="Pfam" id="PF00828">
    <property type="entry name" value="Ribosomal_L27A"/>
    <property type="match status" value="1"/>
</dbReference>
<dbReference type="SUPFAM" id="SSF52080">
    <property type="entry name" value="Ribosomal proteins L15p and L18e"/>
    <property type="match status" value="1"/>
</dbReference>
<comment type="function">
    <text evidence="1">Binds to the 23S rRNA.</text>
</comment>
<comment type="subunit">
    <text evidence="1">Part of the 50S ribosomal subunit.</text>
</comment>
<comment type="similarity">
    <text evidence="1">Belongs to the universal ribosomal protein uL15 family.</text>
</comment>
<proteinExistence type="inferred from homology"/>
<reference key="1">
    <citation type="journal article" date="2008" name="J. Bacteriol.">
        <title>Insights into plant cell wall degradation from the genome sequence of the soil bacterium Cellvibrio japonicus.</title>
        <authorList>
            <person name="DeBoy R.T."/>
            <person name="Mongodin E.F."/>
            <person name="Fouts D.E."/>
            <person name="Tailford L.E."/>
            <person name="Khouri H."/>
            <person name="Emerson J.B."/>
            <person name="Mohamoud Y."/>
            <person name="Watkins K."/>
            <person name="Henrissat B."/>
            <person name="Gilbert H.J."/>
            <person name="Nelson K.E."/>
        </authorList>
    </citation>
    <scope>NUCLEOTIDE SEQUENCE [LARGE SCALE GENOMIC DNA]</scope>
    <source>
        <strain>Ueda107</strain>
    </source>
</reference>
<evidence type="ECO:0000255" key="1">
    <source>
        <dbReference type="HAMAP-Rule" id="MF_01341"/>
    </source>
</evidence>
<evidence type="ECO:0000256" key="2">
    <source>
        <dbReference type="SAM" id="MobiDB-lite"/>
    </source>
</evidence>
<evidence type="ECO:0000305" key="3"/>